<accession>B3EWM7</accession>
<sequence length="8" mass="993">QLTFSPDW</sequence>
<evidence type="ECO:0000250" key="1">
    <source>
        <dbReference type="UniProtKB" id="P61856"/>
    </source>
</evidence>
<evidence type="ECO:0000255" key="2"/>
<evidence type="ECO:0000269" key="3">
    <source>
    </source>
</evidence>
<evidence type="ECO:0000269" key="4">
    <source>
    </source>
</evidence>
<evidence type="ECO:0000303" key="5">
    <source>
    </source>
</evidence>
<evidence type="ECO:0000303" key="6">
    <source>
    </source>
</evidence>
<evidence type="ECO:0000305" key="7"/>
<feature type="peptide" id="PRO_0000419717" description="Adipokinetic hormone" evidence="4">
    <location>
        <begin position="1"/>
        <end position="8"/>
    </location>
</feature>
<feature type="modified residue" description="Pyrrolidone carboxylic acid" evidence="3 4">
    <location>
        <position position="1"/>
    </location>
</feature>
<feature type="modified residue" description="Tryptophan amide" evidence="3 4">
    <location>
        <position position="8"/>
    </location>
</feature>
<feature type="unsure residue" description="L or I" evidence="4">
    <location>
        <position position="2"/>
    </location>
</feature>
<protein>
    <recommendedName>
        <fullName evidence="5 6">Adipokinetic hormone</fullName>
        <shortName evidence="5 6">AKH</shortName>
    </recommendedName>
    <alternativeName>
        <fullName evidence="1">Hypertrehalosaemic hormone</fullName>
        <shortName evidence="1">HRTH</shortName>
    </alternativeName>
</protein>
<proteinExistence type="evidence at protein level"/>
<organism>
    <name type="scientific">Delia radicum</name>
    <name type="common">Cabbage root fly</name>
    <name type="synonym">Anthomyia brassicae</name>
    <dbReference type="NCBI Taxonomy" id="30064"/>
    <lineage>
        <taxon>Eukaryota</taxon>
        <taxon>Metazoa</taxon>
        <taxon>Ecdysozoa</taxon>
        <taxon>Arthropoda</taxon>
        <taxon>Hexapoda</taxon>
        <taxon>Insecta</taxon>
        <taxon>Pterygota</taxon>
        <taxon>Neoptera</taxon>
        <taxon>Endopterygota</taxon>
        <taxon>Diptera</taxon>
        <taxon>Brachycera</taxon>
        <taxon>Muscomorpha</taxon>
        <taxon>Muscoidea</taxon>
        <taxon>Anthomyiidae</taxon>
        <taxon>Anthomyiinae</taxon>
        <taxon>Delia</taxon>
    </lineage>
</organism>
<keyword id="KW-0027">Amidation</keyword>
<keyword id="KW-0903">Direct protein sequencing</keyword>
<keyword id="KW-0372">Hormone</keyword>
<keyword id="KW-0527">Neuropeptide</keyword>
<keyword id="KW-0873">Pyrrolidone carboxylic acid</keyword>
<keyword id="KW-0964">Secreted</keyword>
<reference evidence="7" key="1">
    <citation type="journal article" date="2011" name="Peptides">
        <title>Neuropeptides associated with the central nervous system of the cabbage root fly, Delia radicum (L).</title>
        <authorList>
            <person name="Audsley N."/>
            <person name="Matthews H.J."/>
            <person name="Down R.E."/>
            <person name="Weaver R.J."/>
        </authorList>
    </citation>
    <scope>PROTEIN SEQUENCE</scope>
    <scope>TISSUE SPECIFICITY</scope>
    <scope>MASS SPECTROMETRY</scope>
    <scope>PYROGLUTAMATE FORMATION AT GLN-1</scope>
    <scope>AMIDATION AT TRP-8</scope>
    <source>
        <tissue evidence="3">Abdominal ganglion</tissue>
    </source>
</reference>
<reference evidence="7" key="2">
    <citation type="journal article" date="2012" name="PLoS ONE">
        <title>Peptidomics of the agriculturally damaging larval stage of the cabbage root fly Delia radicum (Diptera: Anthomyiidae).</title>
        <authorList>
            <person name="Zoephel J."/>
            <person name="Reiher W."/>
            <person name="Rexer K.-H."/>
            <person name="Kahnt J."/>
            <person name="Wegener C."/>
        </authorList>
    </citation>
    <scope>PROTEIN SEQUENCE</scope>
    <scope>TISSUE SPECIFICITY</scope>
    <scope>DEVELOPMENTAL STAGE</scope>
    <scope>MASS SPECTROMETRY</scope>
    <scope>PYROGLUTAMATE FORMATION AT GLN-1</scope>
    <scope>AMIDATION AT TRP-8</scope>
    <source>
        <tissue evidence="4">Ring ganglion</tissue>
    </source>
</reference>
<comment type="function">
    <text evidence="1">Probably causes a marked increase in hemolymph carbohydrate.</text>
</comment>
<comment type="subcellular location">
    <subcellularLocation>
        <location evidence="1">Secreted</location>
    </subcellularLocation>
</comment>
<comment type="tissue specificity">
    <text evidence="3 4">In larvae, expressed in the ring gland but not in midgut, CNS, thoracic perisympathetic organs (tPSO) and abdominal perisympathetic organs (aPSO) (at protein level). In adults, expressed in corpora cardiaca and corpora allata but not in brain and thoracic-abdominal ganglion (at protein level).</text>
</comment>
<comment type="developmental stage">
    <text evidence="3 4">Detected in larvae and adults.</text>
</comment>
<comment type="mass spectrometry" mass="997.5" method="MALDI" evidence="3">
    <text>Sodium ion adduct.</text>
</comment>
<comment type="mass spectrometry" mass="975.48" method="MALDI" evidence="4"/>
<comment type="similarity">
    <text evidence="2">Belongs to the AKH/HRTH/RPCH family.</text>
</comment>
<dbReference type="GO" id="GO:0005576">
    <property type="term" value="C:extracellular region"/>
    <property type="evidence" value="ECO:0007669"/>
    <property type="project" value="UniProtKB-SubCell"/>
</dbReference>
<dbReference type="GO" id="GO:0005179">
    <property type="term" value="F:hormone activity"/>
    <property type="evidence" value="ECO:0007669"/>
    <property type="project" value="UniProtKB-KW"/>
</dbReference>
<dbReference type="GO" id="GO:0007218">
    <property type="term" value="P:neuropeptide signaling pathway"/>
    <property type="evidence" value="ECO:0007669"/>
    <property type="project" value="UniProtKB-KW"/>
</dbReference>
<dbReference type="InterPro" id="IPR002047">
    <property type="entry name" value="Adipokinetic_hormone_CS"/>
</dbReference>
<dbReference type="PROSITE" id="PS00256">
    <property type="entry name" value="AKH"/>
    <property type="match status" value="1"/>
</dbReference>
<name>AKH_DELRA</name>